<comment type="function">
    <text evidence="1">Catalyzes the decarboxylation of orotidine 5'-monophosphate (OMP) to uridine 5'-monophosphate (UMP).</text>
</comment>
<comment type="catalytic activity">
    <reaction evidence="1">
        <text>orotidine 5'-phosphate + H(+) = UMP + CO2</text>
        <dbReference type="Rhea" id="RHEA:11596"/>
        <dbReference type="ChEBI" id="CHEBI:15378"/>
        <dbReference type="ChEBI" id="CHEBI:16526"/>
        <dbReference type="ChEBI" id="CHEBI:57538"/>
        <dbReference type="ChEBI" id="CHEBI:57865"/>
        <dbReference type="EC" id="4.1.1.23"/>
    </reaction>
</comment>
<comment type="pathway">
    <text evidence="1">Pyrimidine metabolism; UMP biosynthesis via de novo pathway; UMP from orotate: step 2/2.</text>
</comment>
<comment type="subunit">
    <text evidence="1">Homodimer.</text>
</comment>
<comment type="similarity">
    <text evidence="1">Belongs to the OMP decarboxylase family. Type 1 subfamily.</text>
</comment>
<gene>
    <name evidence="1" type="primary">pyrF</name>
    <name type="ordered locus">Smed_3540</name>
</gene>
<proteinExistence type="inferred from homology"/>
<dbReference type="EC" id="4.1.1.23" evidence="1"/>
<dbReference type="EMBL" id="CP000738">
    <property type="protein sequence ID" value="ABR62356.1"/>
    <property type="molecule type" value="Genomic_DNA"/>
</dbReference>
<dbReference type="RefSeq" id="WP_012067735.1">
    <property type="nucleotide sequence ID" value="NC_009636.1"/>
</dbReference>
<dbReference type="RefSeq" id="YP_001329191.1">
    <property type="nucleotide sequence ID" value="NC_009636.1"/>
</dbReference>
<dbReference type="SMR" id="A6UFC6"/>
<dbReference type="STRING" id="366394.Smed_3540"/>
<dbReference type="GeneID" id="61611094"/>
<dbReference type="KEGG" id="smd:Smed_3540"/>
<dbReference type="PATRIC" id="fig|366394.8.peg.6792"/>
<dbReference type="eggNOG" id="COG0284">
    <property type="taxonomic scope" value="Bacteria"/>
</dbReference>
<dbReference type="HOGENOM" id="CLU_067069_1_0_5"/>
<dbReference type="OrthoDB" id="9806203at2"/>
<dbReference type="UniPathway" id="UPA00070">
    <property type="reaction ID" value="UER00120"/>
</dbReference>
<dbReference type="Proteomes" id="UP000001108">
    <property type="component" value="Chromosome"/>
</dbReference>
<dbReference type="GO" id="GO:0005829">
    <property type="term" value="C:cytosol"/>
    <property type="evidence" value="ECO:0007669"/>
    <property type="project" value="TreeGrafter"/>
</dbReference>
<dbReference type="GO" id="GO:0004590">
    <property type="term" value="F:orotidine-5'-phosphate decarboxylase activity"/>
    <property type="evidence" value="ECO:0007669"/>
    <property type="project" value="UniProtKB-UniRule"/>
</dbReference>
<dbReference type="GO" id="GO:0006207">
    <property type="term" value="P:'de novo' pyrimidine nucleobase biosynthetic process"/>
    <property type="evidence" value="ECO:0007669"/>
    <property type="project" value="InterPro"/>
</dbReference>
<dbReference type="GO" id="GO:0044205">
    <property type="term" value="P:'de novo' UMP biosynthetic process"/>
    <property type="evidence" value="ECO:0007669"/>
    <property type="project" value="UniProtKB-UniRule"/>
</dbReference>
<dbReference type="CDD" id="cd04725">
    <property type="entry name" value="OMP_decarboxylase_like"/>
    <property type="match status" value="1"/>
</dbReference>
<dbReference type="Gene3D" id="3.20.20.70">
    <property type="entry name" value="Aldolase class I"/>
    <property type="match status" value="1"/>
</dbReference>
<dbReference type="HAMAP" id="MF_01200_B">
    <property type="entry name" value="OMPdecase_type1_B"/>
    <property type="match status" value="1"/>
</dbReference>
<dbReference type="InterPro" id="IPR013785">
    <property type="entry name" value="Aldolase_TIM"/>
</dbReference>
<dbReference type="InterPro" id="IPR014732">
    <property type="entry name" value="OMPdecase"/>
</dbReference>
<dbReference type="InterPro" id="IPR018089">
    <property type="entry name" value="OMPdecase_AS"/>
</dbReference>
<dbReference type="InterPro" id="IPR047596">
    <property type="entry name" value="OMPdecase_bac"/>
</dbReference>
<dbReference type="InterPro" id="IPR001754">
    <property type="entry name" value="OMPdeCOase_dom"/>
</dbReference>
<dbReference type="InterPro" id="IPR011060">
    <property type="entry name" value="RibuloseP-bd_barrel"/>
</dbReference>
<dbReference type="NCBIfam" id="NF001273">
    <property type="entry name" value="PRK00230.1"/>
    <property type="match status" value="1"/>
</dbReference>
<dbReference type="NCBIfam" id="TIGR01740">
    <property type="entry name" value="pyrF"/>
    <property type="match status" value="1"/>
</dbReference>
<dbReference type="PANTHER" id="PTHR32119">
    <property type="entry name" value="OROTIDINE 5'-PHOSPHATE DECARBOXYLASE"/>
    <property type="match status" value="1"/>
</dbReference>
<dbReference type="PANTHER" id="PTHR32119:SF2">
    <property type="entry name" value="OROTIDINE 5'-PHOSPHATE DECARBOXYLASE"/>
    <property type="match status" value="1"/>
</dbReference>
<dbReference type="Pfam" id="PF00215">
    <property type="entry name" value="OMPdecase"/>
    <property type="match status" value="1"/>
</dbReference>
<dbReference type="SMART" id="SM00934">
    <property type="entry name" value="OMPdecase"/>
    <property type="match status" value="1"/>
</dbReference>
<dbReference type="SUPFAM" id="SSF51366">
    <property type="entry name" value="Ribulose-phoshate binding barrel"/>
    <property type="match status" value="1"/>
</dbReference>
<dbReference type="PROSITE" id="PS00156">
    <property type="entry name" value="OMPDECASE"/>
    <property type="match status" value="1"/>
</dbReference>
<sequence>MSARDRLIVGLDLPTLAEAEKIVSALGEEVLFYKIGYQLAFAGGLDFARDLAASGKQVFLDMKLLDIDNTVAKGVENIVKMGVSMLTLHAYPKAMKSAVEAARGSNLCLLAVTVLTSMDEQDVMDAGYNYDPQSLVLRRAEQAHAAGMGGIVCSAAEAAAVRKIIGGDMALVTPGIRPAGAEKGDQKRVMTPADALAAGSSHLVVGRPIVAAPDPLAASRAILAEMESALSG</sequence>
<evidence type="ECO:0000255" key="1">
    <source>
        <dbReference type="HAMAP-Rule" id="MF_01200"/>
    </source>
</evidence>
<keyword id="KW-0210">Decarboxylase</keyword>
<keyword id="KW-0456">Lyase</keyword>
<keyword id="KW-0665">Pyrimidine biosynthesis</keyword>
<name>PYRF_SINMW</name>
<reference key="1">
    <citation type="submission" date="2007-06" db="EMBL/GenBank/DDBJ databases">
        <title>Complete sequence of Sinorhizobium medicae WSM419 chromosome.</title>
        <authorList>
            <consortium name="US DOE Joint Genome Institute"/>
            <person name="Copeland A."/>
            <person name="Lucas S."/>
            <person name="Lapidus A."/>
            <person name="Barry K."/>
            <person name="Glavina del Rio T."/>
            <person name="Dalin E."/>
            <person name="Tice H."/>
            <person name="Pitluck S."/>
            <person name="Chain P."/>
            <person name="Malfatti S."/>
            <person name="Shin M."/>
            <person name="Vergez L."/>
            <person name="Schmutz J."/>
            <person name="Larimer F."/>
            <person name="Land M."/>
            <person name="Hauser L."/>
            <person name="Kyrpides N."/>
            <person name="Mikhailova N."/>
            <person name="Reeve W.G."/>
            <person name="Richardson P."/>
        </authorList>
    </citation>
    <scope>NUCLEOTIDE SEQUENCE [LARGE SCALE GENOMIC DNA]</scope>
    <source>
        <strain>WSM419</strain>
    </source>
</reference>
<organism>
    <name type="scientific">Sinorhizobium medicae (strain WSM419)</name>
    <name type="common">Ensifer medicae</name>
    <dbReference type="NCBI Taxonomy" id="366394"/>
    <lineage>
        <taxon>Bacteria</taxon>
        <taxon>Pseudomonadati</taxon>
        <taxon>Pseudomonadota</taxon>
        <taxon>Alphaproteobacteria</taxon>
        <taxon>Hyphomicrobiales</taxon>
        <taxon>Rhizobiaceae</taxon>
        <taxon>Sinorhizobium/Ensifer group</taxon>
        <taxon>Sinorhizobium</taxon>
    </lineage>
</organism>
<feature type="chain" id="PRO_1000065941" description="Orotidine 5'-phosphate decarboxylase">
    <location>
        <begin position="1"/>
        <end position="232"/>
    </location>
</feature>
<feature type="active site" description="Proton donor" evidence="1">
    <location>
        <position position="63"/>
    </location>
</feature>
<feature type="binding site" evidence="1">
    <location>
        <position position="12"/>
    </location>
    <ligand>
        <name>substrate</name>
    </ligand>
</feature>
<feature type="binding site" evidence="1">
    <location>
        <position position="34"/>
    </location>
    <ligand>
        <name>substrate</name>
    </ligand>
</feature>
<feature type="binding site" evidence="1">
    <location>
        <begin position="61"/>
        <end position="70"/>
    </location>
    <ligand>
        <name>substrate</name>
    </ligand>
</feature>
<feature type="binding site" evidence="1">
    <location>
        <position position="116"/>
    </location>
    <ligand>
        <name>substrate</name>
    </ligand>
</feature>
<feature type="binding site" evidence="1">
    <location>
        <position position="177"/>
    </location>
    <ligand>
        <name>substrate</name>
    </ligand>
</feature>
<feature type="binding site" evidence="1">
    <location>
        <position position="186"/>
    </location>
    <ligand>
        <name>substrate</name>
    </ligand>
</feature>
<feature type="binding site" evidence="1">
    <location>
        <position position="206"/>
    </location>
    <ligand>
        <name>substrate</name>
    </ligand>
</feature>
<feature type="binding site" evidence="1">
    <location>
        <position position="207"/>
    </location>
    <ligand>
        <name>substrate</name>
    </ligand>
</feature>
<protein>
    <recommendedName>
        <fullName evidence="1">Orotidine 5'-phosphate decarboxylase</fullName>
        <ecNumber evidence="1">4.1.1.23</ecNumber>
    </recommendedName>
    <alternativeName>
        <fullName evidence="1">OMP decarboxylase</fullName>
        <shortName evidence="1">OMPDCase</shortName>
        <shortName evidence="1">OMPdecase</shortName>
    </alternativeName>
</protein>
<accession>A6UFC6</accession>